<proteinExistence type="inferred from homology"/>
<keyword id="KW-0597">Phosphoprotein</keyword>
<keyword id="KW-1185">Reference proteome</keyword>
<keyword id="KW-0902">Two-component regulatory system</keyword>
<accession>Q9KT83</accession>
<gene>
    <name type="primary">luxU</name>
    <name type="ordered locus">VC_1022</name>
</gene>
<dbReference type="EMBL" id="AE003852">
    <property type="protein sequence ID" value="AAF94181.1"/>
    <property type="molecule type" value="Genomic_DNA"/>
</dbReference>
<dbReference type="PIR" id="D82250">
    <property type="entry name" value="D82250"/>
</dbReference>
<dbReference type="RefSeq" id="NP_230667.1">
    <property type="nucleotide sequence ID" value="NC_002505.1"/>
</dbReference>
<dbReference type="RefSeq" id="WP_001209531.1">
    <property type="nucleotide sequence ID" value="NZ_LT906614.1"/>
</dbReference>
<dbReference type="SMR" id="Q9KT83"/>
<dbReference type="STRING" id="243277.VC_1022"/>
<dbReference type="DNASU" id="2614292"/>
<dbReference type="EnsemblBacteria" id="AAF94181">
    <property type="protein sequence ID" value="AAF94181"/>
    <property type="gene ID" value="VC_1022"/>
</dbReference>
<dbReference type="GeneID" id="89514874"/>
<dbReference type="KEGG" id="vch:VC_1022"/>
<dbReference type="PATRIC" id="fig|243277.26.peg.976"/>
<dbReference type="eggNOG" id="COG2198">
    <property type="taxonomic scope" value="Bacteria"/>
</dbReference>
<dbReference type="HOGENOM" id="CLU_168256_0_0_6"/>
<dbReference type="Proteomes" id="UP000000584">
    <property type="component" value="Chromosome 1"/>
</dbReference>
<dbReference type="GO" id="GO:0004672">
    <property type="term" value="F:protein kinase activity"/>
    <property type="evidence" value="ECO:0007669"/>
    <property type="project" value="UniProtKB-ARBA"/>
</dbReference>
<dbReference type="GO" id="GO:0000160">
    <property type="term" value="P:phosphorelay signal transduction system"/>
    <property type="evidence" value="ECO:0007669"/>
    <property type="project" value="UniProtKB-KW"/>
</dbReference>
<dbReference type="FunFam" id="1.20.120.160:FF:000012">
    <property type="entry name" value="Phosphorelay protein LuxU"/>
    <property type="match status" value="1"/>
</dbReference>
<dbReference type="Gene3D" id="1.20.120.160">
    <property type="entry name" value="HPT domain"/>
    <property type="match status" value="1"/>
</dbReference>
<dbReference type="InterPro" id="IPR036641">
    <property type="entry name" value="HPT_dom_sf"/>
</dbReference>
<dbReference type="InterPro" id="IPR053403">
    <property type="entry name" value="QS_phosphorelay_intermediate"/>
</dbReference>
<dbReference type="InterPro" id="IPR008207">
    <property type="entry name" value="Sig_transdc_His_kin_Hpt_dom"/>
</dbReference>
<dbReference type="NCBIfam" id="NF041948">
    <property type="entry name" value="Phrelay_LuxU_Vib"/>
    <property type="match status" value="1"/>
</dbReference>
<dbReference type="Pfam" id="PF01627">
    <property type="entry name" value="Hpt"/>
    <property type="match status" value="1"/>
</dbReference>
<dbReference type="SUPFAM" id="SSF47226">
    <property type="entry name" value="Histidine-containing phosphotransfer domain, HPT domain"/>
    <property type="match status" value="1"/>
</dbReference>
<dbReference type="PROSITE" id="PS50894">
    <property type="entry name" value="HPT"/>
    <property type="match status" value="1"/>
</dbReference>
<evidence type="ECO:0000250" key="1"/>
<evidence type="ECO:0000255" key="2">
    <source>
        <dbReference type="PROSITE-ProRule" id="PRU00110"/>
    </source>
</evidence>
<evidence type="ECO:0000269" key="3">
    <source>
    </source>
</evidence>
<organism>
    <name type="scientific">Vibrio cholerae serotype O1 (strain ATCC 39315 / El Tor Inaba N16961)</name>
    <dbReference type="NCBI Taxonomy" id="243277"/>
    <lineage>
        <taxon>Bacteria</taxon>
        <taxon>Pseudomonadati</taxon>
        <taxon>Pseudomonadota</taxon>
        <taxon>Gammaproteobacteria</taxon>
        <taxon>Vibrionales</taxon>
        <taxon>Vibrionaceae</taxon>
        <taxon>Vibrio</taxon>
    </lineage>
</organism>
<protein>
    <recommendedName>
        <fullName>Phosphorelay protein LuxU</fullName>
    </recommendedName>
</protein>
<name>LUXU_VIBCH</name>
<sequence>MREWINQSKIDLLAKEIGEENVPILVNIFLGELNDYQSKLVSDTVADKLGYLKEISHALKSSAASFGADRLCAKAVELDSRAKSGEMMDISLEVEHMLELLKQTHQCYSDLVH</sequence>
<feature type="chain" id="PRO_0000220140" description="Phosphorelay protein LuxU">
    <location>
        <begin position="1"/>
        <end position="113"/>
    </location>
</feature>
<feature type="domain" description="HPt" evidence="2">
    <location>
        <begin position="18"/>
        <end position="113"/>
    </location>
</feature>
<feature type="modified residue" description="Phosphohistidine" evidence="2">
    <location>
        <position position="57"/>
    </location>
</feature>
<reference key="1">
    <citation type="journal article" date="2000" name="Nature">
        <title>DNA sequence of both chromosomes of the cholera pathogen Vibrio cholerae.</title>
        <authorList>
            <person name="Heidelberg J.F."/>
            <person name="Eisen J.A."/>
            <person name="Nelson W.C."/>
            <person name="Clayton R.A."/>
            <person name="Gwinn M.L."/>
            <person name="Dodson R.J."/>
            <person name="Haft D.H."/>
            <person name="Hickey E.K."/>
            <person name="Peterson J.D."/>
            <person name="Umayam L.A."/>
            <person name="Gill S.R."/>
            <person name="Nelson K.E."/>
            <person name="Read T.D."/>
            <person name="Tettelin H."/>
            <person name="Richardson D.L."/>
            <person name="Ermolaeva M.D."/>
            <person name="Vamathevan J.J."/>
            <person name="Bass S."/>
            <person name="Qin H."/>
            <person name="Dragoi I."/>
            <person name="Sellers P."/>
            <person name="McDonald L.A."/>
            <person name="Utterback T.R."/>
            <person name="Fleischmann R.D."/>
            <person name="Nierman W.C."/>
            <person name="White O."/>
            <person name="Salzberg S.L."/>
            <person name="Smith H.O."/>
            <person name="Colwell R.R."/>
            <person name="Mekalanos J.J."/>
            <person name="Venter J.C."/>
            <person name="Fraser C.M."/>
        </authorList>
    </citation>
    <scope>NUCLEOTIDE SEQUENCE [LARGE SCALE GENOMIC DNA]</scope>
    <source>
        <strain>ATCC 39315 / El Tor Inaba N16961</strain>
    </source>
</reference>
<reference key="2">
    <citation type="journal article" date="2002" name="Cell">
        <title>Parallel quorum sensing systems converge to regulate virulence in Vibrio cholerae.</title>
        <authorList>
            <person name="Miller M.B."/>
            <person name="Skorupski K."/>
            <person name="Lenz D.H."/>
            <person name="Taylor R.K."/>
            <person name="Bassler B.L."/>
        </authorList>
    </citation>
    <scope>FUNCTION</scope>
</reference>
<reference key="3">
    <citation type="journal article" date="1997" name="J. Bacteriol.">
        <title>Cross-species induction of luminescence in the quorum-sensing bacterium Vibrio harveyi.</title>
        <authorList>
            <person name="Bassler B.L."/>
            <person name="Greenberg E.P."/>
            <person name="Stevens A.M."/>
        </authorList>
    </citation>
    <scope>AUTOINDUCER 2 (AI-2) SYNTHESIS IN V.CHOLERAE</scope>
</reference>
<comment type="function">
    <text evidence="3">Phosphorelay protein which receives sensory signals from a sensory kinase and transmit them to LuxO. At low cell density, a phosphoryl group is transferred from the sensory kinase, probably on His-57 and this phosphoryl group is further transferred to LuxO.</text>
</comment>
<comment type="subunit">
    <text evidence="1">Monomer.</text>
</comment>